<protein>
    <recommendedName>
        <fullName evidence="1">Large ribosomal subunit protein bL12</fullName>
    </recommendedName>
    <alternativeName>
        <fullName evidence="2">50S ribosomal protein L7/L12</fullName>
    </alternativeName>
</protein>
<evidence type="ECO:0000255" key="1">
    <source>
        <dbReference type="HAMAP-Rule" id="MF_00368"/>
    </source>
</evidence>
<evidence type="ECO:0000305" key="2"/>
<keyword id="KW-0687">Ribonucleoprotein</keyword>
<keyword id="KW-0689">Ribosomal protein</keyword>
<dbReference type="EMBL" id="AL596164">
    <property type="protein sequence ID" value="CAC95516.1"/>
    <property type="molecule type" value="Genomic_DNA"/>
</dbReference>
<dbReference type="PIR" id="AD1468">
    <property type="entry name" value="AD1468"/>
</dbReference>
<dbReference type="RefSeq" id="WP_003729189.1">
    <property type="nucleotide sequence ID" value="NC_003212.1"/>
</dbReference>
<dbReference type="SMR" id="Q92F24"/>
<dbReference type="STRING" id="272626.gene:17564610"/>
<dbReference type="GeneID" id="93238165"/>
<dbReference type="KEGG" id="lin:rplL"/>
<dbReference type="eggNOG" id="COG0222">
    <property type="taxonomic scope" value="Bacteria"/>
</dbReference>
<dbReference type="HOGENOM" id="CLU_086499_3_2_9"/>
<dbReference type="OrthoDB" id="9811748at2"/>
<dbReference type="Proteomes" id="UP000002513">
    <property type="component" value="Chromosome"/>
</dbReference>
<dbReference type="GO" id="GO:0022625">
    <property type="term" value="C:cytosolic large ribosomal subunit"/>
    <property type="evidence" value="ECO:0007669"/>
    <property type="project" value="TreeGrafter"/>
</dbReference>
<dbReference type="GO" id="GO:0003729">
    <property type="term" value="F:mRNA binding"/>
    <property type="evidence" value="ECO:0007669"/>
    <property type="project" value="TreeGrafter"/>
</dbReference>
<dbReference type="GO" id="GO:0003735">
    <property type="term" value="F:structural constituent of ribosome"/>
    <property type="evidence" value="ECO:0007669"/>
    <property type="project" value="InterPro"/>
</dbReference>
<dbReference type="GO" id="GO:0006412">
    <property type="term" value="P:translation"/>
    <property type="evidence" value="ECO:0007669"/>
    <property type="project" value="UniProtKB-UniRule"/>
</dbReference>
<dbReference type="CDD" id="cd00387">
    <property type="entry name" value="Ribosomal_L7_L12"/>
    <property type="match status" value="1"/>
</dbReference>
<dbReference type="FunFam" id="1.20.5.710:FF:000002">
    <property type="entry name" value="50S ribosomal protein L7/L12"/>
    <property type="match status" value="1"/>
</dbReference>
<dbReference type="FunFam" id="3.30.1390.10:FF:000001">
    <property type="entry name" value="50S ribosomal protein L7/L12"/>
    <property type="match status" value="1"/>
</dbReference>
<dbReference type="Gene3D" id="3.30.1390.10">
    <property type="match status" value="1"/>
</dbReference>
<dbReference type="Gene3D" id="1.20.5.710">
    <property type="entry name" value="Single helix bin"/>
    <property type="match status" value="1"/>
</dbReference>
<dbReference type="HAMAP" id="MF_00368">
    <property type="entry name" value="Ribosomal_bL12"/>
    <property type="match status" value="1"/>
</dbReference>
<dbReference type="InterPro" id="IPR000206">
    <property type="entry name" value="Ribosomal_bL12"/>
</dbReference>
<dbReference type="InterPro" id="IPR013823">
    <property type="entry name" value="Ribosomal_bL12_C"/>
</dbReference>
<dbReference type="InterPro" id="IPR014719">
    <property type="entry name" value="Ribosomal_bL12_C/ClpS-like"/>
</dbReference>
<dbReference type="InterPro" id="IPR008932">
    <property type="entry name" value="Ribosomal_bL12_oligo"/>
</dbReference>
<dbReference type="InterPro" id="IPR036235">
    <property type="entry name" value="Ribosomal_bL12_oligo_N_sf"/>
</dbReference>
<dbReference type="NCBIfam" id="TIGR00855">
    <property type="entry name" value="L12"/>
    <property type="match status" value="1"/>
</dbReference>
<dbReference type="PANTHER" id="PTHR45987">
    <property type="entry name" value="39S RIBOSOMAL PROTEIN L12"/>
    <property type="match status" value="1"/>
</dbReference>
<dbReference type="PANTHER" id="PTHR45987:SF4">
    <property type="entry name" value="LARGE RIBOSOMAL SUBUNIT PROTEIN BL12M"/>
    <property type="match status" value="1"/>
</dbReference>
<dbReference type="Pfam" id="PF00542">
    <property type="entry name" value="Ribosomal_L12"/>
    <property type="match status" value="1"/>
</dbReference>
<dbReference type="Pfam" id="PF16320">
    <property type="entry name" value="Ribosomal_L12_N"/>
    <property type="match status" value="1"/>
</dbReference>
<dbReference type="SUPFAM" id="SSF54736">
    <property type="entry name" value="ClpS-like"/>
    <property type="match status" value="1"/>
</dbReference>
<dbReference type="SUPFAM" id="SSF48300">
    <property type="entry name" value="Ribosomal protein L7/12, oligomerisation (N-terminal) domain"/>
    <property type="match status" value="1"/>
</dbReference>
<reference key="1">
    <citation type="journal article" date="2001" name="Science">
        <title>Comparative genomics of Listeria species.</title>
        <authorList>
            <person name="Glaser P."/>
            <person name="Frangeul L."/>
            <person name="Buchrieser C."/>
            <person name="Rusniok C."/>
            <person name="Amend A."/>
            <person name="Baquero F."/>
            <person name="Berche P."/>
            <person name="Bloecker H."/>
            <person name="Brandt P."/>
            <person name="Chakraborty T."/>
            <person name="Charbit A."/>
            <person name="Chetouani F."/>
            <person name="Couve E."/>
            <person name="de Daruvar A."/>
            <person name="Dehoux P."/>
            <person name="Domann E."/>
            <person name="Dominguez-Bernal G."/>
            <person name="Duchaud E."/>
            <person name="Durant L."/>
            <person name="Dussurget O."/>
            <person name="Entian K.-D."/>
            <person name="Fsihi H."/>
            <person name="Garcia-del Portillo F."/>
            <person name="Garrido P."/>
            <person name="Gautier L."/>
            <person name="Goebel W."/>
            <person name="Gomez-Lopez N."/>
            <person name="Hain T."/>
            <person name="Hauf J."/>
            <person name="Jackson D."/>
            <person name="Jones L.-M."/>
            <person name="Kaerst U."/>
            <person name="Kreft J."/>
            <person name="Kuhn M."/>
            <person name="Kunst F."/>
            <person name="Kurapkat G."/>
            <person name="Madueno E."/>
            <person name="Maitournam A."/>
            <person name="Mata Vicente J."/>
            <person name="Ng E."/>
            <person name="Nedjari H."/>
            <person name="Nordsiek G."/>
            <person name="Novella S."/>
            <person name="de Pablos B."/>
            <person name="Perez-Diaz J.-C."/>
            <person name="Purcell R."/>
            <person name="Remmel B."/>
            <person name="Rose M."/>
            <person name="Schlueter T."/>
            <person name="Simoes N."/>
            <person name="Tierrez A."/>
            <person name="Vazquez-Boland J.-A."/>
            <person name="Voss H."/>
            <person name="Wehland J."/>
            <person name="Cossart P."/>
        </authorList>
    </citation>
    <scope>NUCLEOTIDE SEQUENCE [LARGE SCALE GENOMIC DNA]</scope>
    <source>
        <strain>ATCC BAA-680 / CLIP 11262</strain>
    </source>
</reference>
<accession>Q92F24</accession>
<sequence length="120" mass="12441">MALNIEEIIASVKEASVLELNDLVKAIEEEFGVTAAAPVAVAAAGGGAAEQTEFTVELASAGDSKIKVIKVVREITGLGLKEAKELVDNAPKALKEGVAKDEAEEIKAKLEEVGANVEVK</sequence>
<name>RL7_LISIN</name>
<organism>
    <name type="scientific">Listeria innocua serovar 6a (strain ATCC BAA-680 / CLIP 11262)</name>
    <dbReference type="NCBI Taxonomy" id="272626"/>
    <lineage>
        <taxon>Bacteria</taxon>
        <taxon>Bacillati</taxon>
        <taxon>Bacillota</taxon>
        <taxon>Bacilli</taxon>
        <taxon>Bacillales</taxon>
        <taxon>Listeriaceae</taxon>
        <taxon>Listeria</taxon>
    </lineage>
</organism>
<gene>
    <name evidence="1" type="primary">rplL</name>
    <name type="ordered locus">lin0283</name>
</gene>
<proteinExistence type="inferred from homology"/>
<feature type="chain" id="PRO_0000157545" description="Large ribosomal subunit protein bL12">
    <location>
        <begin position="1"/>
        <end position="120"/>
    </location>
</feature>
<comment type="function">
    <text evidence="1">Forms part of the ribosomal stalk which helps the ribosome interact with GTP-bound translation factors. Is thus essential for accurate translation.</text>
</comment>
<comment type="subunit">
    <text evidence="1">Homodimer. Part of the ribosomal stalk of the 50S ribosomal subunit. Forms a multimeric L10(L12)X complex, where L10 forms an elongated spine to which 2 to 4 L12 dimers bind in a sequential fashion. Binds GTP-bound translation factors.</text>
</comment>
<comment type="similarity">
    <text evidence="1">Belongs to the bacterial ribosomal protein bL12 family.</text>
</comment>